<gene>
    <name evidence="1" type="primary">murQ</name>
    <name type="ordered locus">PMN2A_0315</name>
</gene>
<keyword id="KW-0119">Carbohydrate metabolism</keyword>
<keyword id="KW-0456">Lyase</keyword>
<keyword id="KW-1185">Reference proteome</keyword>
<sequence length="310" mass="33415">MSDTNNHSKNIIHRILTEQINLTSNELDTKSTKEIVNIFSEADKEPQKAVERVIPELINAIDEITSRLKSNGRLFYIGTGTSGRLGVLDASECPPTFCTNPDLVQGIIAGGISSLTTSSEHLEDVSEIAISDLKDRNFSYRDVLIGITASGRTPYVLGALNYSKSISALTISISSVPERDSTLDNDIDIRLITGPEILAGSTRLKAGTATKMALNIISTSVMIKLGKVYGNRMIDLSVSNDKLLDRAIGILFDIGSVDKVTAVQLLKKTNGSVKLSLLIALSGMDVIDAKQLLNDSKGNLRTALIRVKGN</sequence>
<reference key="1">
    <citation type="journal article" date="2007" name="PLoS Genet.">
        <title>Patterns and implications of gene gain and loss in the evolution of Prochlorococcus.</title>
        <authorList>
            <person name="Kettler G.C."/>
            <person name="Martiny A.C."/>
            <person name="Huang K."/>
            <person name="Zucker J."/>
            <person name="Coleman M.L."/>
            <person name="Rodrigue S."/>
            <person name="Chen F."/>
            <person name="Lapidus A."/>
            <person name="Ferriera S."/>
            <person name="Johnson J."/>
            <person name="Steglich C."/>
            <person name="Church G.M."/>
            <person name="Richardson P."/>
            <person name="Chisholm S.W."/>
        </authorList>
    </citation>
    <scope>NUCLEOTIDE SEQUENCE [LARGE SCALE GENOMIC DNA]</scope>
    <source>
        <strain>NATL2A</strain>
    </source>
</reference>
<proteinExistence type="inferred from homology"/>
<accession>Q46L21</accession>
<name>MURQ_PROMT</name>
<feature type="chain" id="PRO_0000249643" description="N-acetylmuramic acid 6-phosphate etherase">
    <location>
        <begin position="1"/>
        <end position="310"/>
    </location>
</feature>
<feature type="domain" description="SIS" evidence="1">
    <location>
        <begin position="64"/>
        <end position="227"/>
    </location>
</feature>
<feature type="active site" description="Proton donor" evidence="1">
    <location>
        <position position="92"/>
    </location>
</feature>
<feature type="active site" evidence="1">
    <location>
        <position position="123"/>
    </location>
</feature>
<protein>
    <recommendedName>
        <fullName evidence="1">N-acetylmuramic acid 6-phosphate etherase</fullName>
        <shortName evidence="1">MurNAc-6-P etherase</shortName>
        <ecNumber evidence="1">4.2.1.126</ecNumber>
    </recommendedName>
    <alternativeName>
        <fullName evidence="1">N-acetylmuramic acid 6-phosphate hydrolase</fullName>
    </alternativeName>
    <alternativeName>
        <fullName evidence="1">N-acetylmuramic acid 6-phosphate lyase</fullName>
    </alternativeName>
</protein>
<organism>
    <name type="scientific">Prochlorococcus marinus (strain NATL2A)</name>
    <dbReference type="NCBI Taxonomy" id="59920"/>
    <lineage>
        <taxon>Bacteria</taxon>
        <taxon>Bacillati</taxon>
        <taxon>Cyanobacteriota</taxon>
        <taxon>Cyanophyceae</taxon>
        <taxon>Synechococcales</taxon>
        <taxon>Prochlorococcaceae</taxon>
        <taxon>Prochlorococcus</taxon>
    </lineage>
</organism>
<evidence type="ECO:0000255" key="1">
    <source>
        <dbReference type="HAMAP-Rule" id="MF_00068"/>
    </source>
</evidence>
<comment type="function">
    <text evidence="1">Specifically catalyzes the cleavage of the D-lactyl ether substituent of MurNAc 6-phosphate, producing GlcNAc 6-phosphate and D-lactate.</text>
</comment>
<comment type="catalytic activity">
    <reaction evidence="1">
        <text>N-acetyl-D-muramate 6-phosphate + H2O = N-acetyl-D-glucosamine 6-phosphate + (R)-lactate</text>
        <dbReference type="Rhea" id="RHEA:26410"/>
        <dbReference type="ChEBI" id="CHEBI:15377"/>
        <dbReference type="ChEBI" id="CHEBI:16004"/>
        <dbReference type="ChEBI" id="CHEBI:57513"/>
        <dbReference type="ChEBI" id="CHEBI:58722"/>
        <dbReference type="EC" id="4.2.1.126"/>
    </reaction>
</comment>
<comment type="pathway">
    <text evidence="1">Amino-sugar metabolism; N-acetylmuramate degradation.</text>
</comment>
<comment type="subunit">
    <text evidence="1">Homodimer.</text>
</comment>
<comment type="miscellaneous">
    <text evidence="1">A lyase-type mechanism (elimination/hydration) is suggested for the cleavage of the lactyl ether bond of MurNAc 6-phosphate, with the formation of an alpha,beta-unsaturated aldehyde intermediate with (E)-stereochemistry, followed by the syn addition of water to give product.</text>
</comment>
<comment type="similarity">
    <text evidence="1">Belongs to the GCKR-like family. MurNAc-6-P etherase subfamily.</text>
</comment>
<dbReference type="EC" id="4.2.1.126" evidence="1"/>
<dbReference type="EMBL" id="CP000095">
    <property type="protein sequence ID" value="AAZ57807.1"/>
    <property type="molecule type" value="Genomic_DNA"/>
</dbReference>
<dbReference type="RefSeq" id="WP_011293849.1">
    <property type="nucleotide sequence ID" value="NC_007335.2"/>
</dbReference>
<dbReference type="SMR" id="Q46L21"/>
<dbReference type="STRING" id="59920.PMN2A_0315"/>
<dbReference type="KEGG" id="pmn:PMN2A_0315"/>
<dbReference type="HOGENOM" id="CLU_049049_1_1_3"/>
<dbReference type="OrthoDB" id="9813395at2"/>
<dbReference type="PhylomeDB" id="Q46L21"/>
<dbReference type="UniPathway" id="UPA00342"/>
<dbReference type="Proteomes" id="UP000002535">
    <property type="component" value="Chromosome"/>
</dbReference>
<dbReference type="GO" id="GO:0097367">
    <property type="term" value="F:carbohydrate derivative binding"/>
    <property type="evidence" value="ECO:0007669"/>
    <property type="project" value="InterPro"/>
</dbReference>
<dbReference type="GO" id="GO:0016835">
    <property type="term" value="F:carbon-oxygen lyase activity"/>
    <property type="evidence" value="ECO:0007669"/>
    <property type="project" value="UniProtKB-UniRule"/>
</dbReference>
<dbReference type="GO" id="GO:0016803">
    <property type="term" value="F:ether hydrolase activity"/>
    <property type="evidence" value="ECO:0007669"/>
    <property type="project" value="TreeGrafter"/>
</dbReference>
<dbReference type="GO" id="GO:0046348">
    <property type="term" value="P:amino sugar catabolic process"/>
    <property type="evidence" value="ECO:0007669"/>
    <property type="project" value="InterPro"/>
</dbReference>
<dbReference type="GO" id="GO:0097173">
    <property type="term" value="P:N-acetylmuramic acid catabolic process"/>
    <property type="evidence" value="ECO:0007669"/>
    <property type="project" value="UniProtKB-UniPathway"/>
</dbReference>
<dbReference type="GO" id="GO:0009254">
    <property type="term" value="P:peptidoglycan turnover"/>
    <property type="evidence" value="ECO:0007669"/>
    <property type="project" value="TreeGrafter"/>
</dbReference>
<dbReference type="CDD" id="cd05007">
    <property type="entry name" value="SIS_Etherase"/>
    <property type="match status" value="1"/>
</dbReference>
<dbReference type="FunFam" id="3.40.50.10490:FF:000014">
    <property type="entry name" value="N-acetylmuramic acid 6-phosphate etherase"/>
    <property type="match status" value="1"/>
</dbReference>
<dbReference type="Gene3D" id="1.10.8.1080">
    <property type="match status" value="1"/>
</dbReference>
<dbReference type="Gene3D" id="3.40.50.10490">
    <property type="entry name" value="Glucose-6-phosphate isomerase like protein, domain 1"/>
    <property type="match status" value="1"/>
</dbReference>
<dbReference type="HAMAP" id="MF_00068">
    <property type="entry name" value="MurQ"/>
    <property type="match status" value="1"/>
</dbReference>
<dbReference type="InterPro" id="IPR005488">
    <property type="entry name" value="Etherase_MurQ"/>
</dbReference>
<dbReference type="InterPro" id="IPR005486">
    <property type="entry name" value="Glucokinase_regulatory_CS"/>
</dbReference>
<dbReference type="InterPro" id="IPR040190">
    <property type="entry name" value="MURQ/GCKR"/>
</dbReference>
<dbReference type="InterPro" id="IPR000408">
    <property type="entry name" value="Reg_chr_condens"/>
</dbReference>
<dbReference type="InterPro" id="IPR001347">
    <property type="entry name" value="SIS_dom"/>
</dbReference>
<dbReference type="InterPro" id="IPR046348">
    <property type="entry name" value="SIS_dom_sf"/>
</dbReference>
<dbReference type="NCBIfam" id="TIGR00274">
    <property type="entry name" value="N-acetylmuramic acid 6-phosphate etherase"/>
    <property type="match status" value="1"/>
</dbReference>
<dbReference type="NCBIfam" id="NF003915">
    <property type="entry name" value="PRK05441.1"/>
    <property type="match status" value="1"/>
</dbReference>
<dbReference type="NCBIfam" id="NF009222">
    <property type="entry name" value="PRK12570.1"/>
    <property type="match status" value="1"/>
</dbReference>
<dbReference type="PANTHER" id="PTHR10088">
    <property type="entry name" value="GLUCOKINASE REGULATORY PROTEIN"/>
    <property type="match status" value="1"/>
</dbReference>
<dbReference type="PANTHER" id="PTHR10088:SF4">
    <property type="entry name" value="GLUCOKINASE REGULATORY PROTEIN"/>
    <property type="match status" value="1"/>
</dbReference>
<dbReference type="Pfam" id="PF20741">
    <property type="entry name" value="GKRP-like_C"/>
    <property type="match status" value="1"/>
</dbReference>
<dbReference type="Pfam" id="PF22645">
    <property type="entry name" value="GKRP_SIS_N"/>
    <property type="match status" value="1"/>
</dbReference>
<dbReference type="SUPFAM" id="SSF53697">
    <property type="entry name" value="SIS domain"/>
    <property type="match status" value="1"/>
</dbReference>
<dbReference type="PROSITE" id="PS01272">
    <property type="entry name" value="GCKR"/>
    <property type="match status" value="1"/>
</dbReference>
<dbReference type="PROSITE" id="PS51464">
    <property type="entry name" value="SIS"/>
    <property type="match status" value="1"/>
</dbReference>